<comment type="function">
    <text evidence="1">Involved in protein export. Acts as a chaperone by maintaining the newly synthesized protein in an open conformation. Functions as a peptidyl-prolyl cis-trans isomerase.</text>
</comment>
<comment type="catalytic activity">
    <reaction evidence="1">
        <text>[protein]-peptidylproline (omega=180) = [protein]-peptidylproline (omega=0)</text>
        <dbReference type="Rhea" id="RHEA:16237"/>
        <dbReference type="Rhea" id="RHEA-COMP:10747"/>
        <dbReference type="Rhea" id="RHEA-COMP:10748"/>
        <dbReference type="ChEBI" id="CHEBI:83833"/>
        <dbReference type="ChEBI" id="CHEBI:83834"/>
        <dbReference type="EC" id="5.2.1.8"/>
    </reaction>
</comment>
<comment type="subcellular location">
    <subcellularLocation>
        <location>Cytoplasm</location>
    </subcellularLocation>
    <text evidence="1">About half TF is bound to the ribosome near the polypeptide exit tunnel while the other half is free in the cytoplasm.</text>
</comment>
<comment type="domain">
    <text evidence="1">Consists of 3 domains; the N-terminus binds the ribosome, the middle domain has PPIase activity, while the C-terminus has intrinsic chaperone activity on its own.</text>
</comment>
<comment type="similarity">
    <text evidence="1">Belongs to the FKBP-type PPIase family. Tig subfamily.</text>
</comment>
<dbReference type="EC" id="5.2.1.8" evidence="1"/>
<dbReference type="EMBL" id="CP000521">
    <property type="protein sequence ID" value="ABO10930.2"/>
    <property type="molecule type" value="Genomic_DNA"/>
</dbReference>
<dbReference type="RefSeq" id="WP_001198432.1">
    <property type="nucleotide sequence ID" value="NZ_CP053098.1"/>
</dbReference>
<dbReference type="SMR" id="A3M1Y6"/>
<dbReference type="GeneID" id="92892480"/>
<dbReference type="KEGG" id="acb:A1S_0475"/>
<dbReference type="HOGENOM" id="CLU_033058_2_0_6"/>
<dbReference type="GO" id="GO:0005737">
    <property type="term" value="C:cytoplasm"/>
    <property type="evidence" value="ECO:0007669"/>
    <property type="project" value="UniProtKB-SubCell"/>
</dbReference>
<dbReference type="GO" id="GO:0003755">
    <property type="term" value="F:peptidyl-prolyl cis-trans isomerase activity"/>
    <property type="evidence" value="ECO:0007669"/>
    <property type="project" value="UniProtKB-UniRule"/>
</dbReference>
<dbReference type="GO" id="GO:0044183">
    <property type="term" value="F:protein folding chaperone"/>
    <property type="evidence" value="ECO:0007669"/>
    <property type="project" value="TreeGrafter"/>
</dbReference>
<dbReference type="GO" id="GO:0043022">
    <property type="term" value="F:ribosome binding"/>
    <property type="evidence" value="ECO:0007669"/>
    <property type="project" value="TreeGrafter"/>
</dbReference>
<dbReference type="GO" id="GO:0051083">
    <property type="term" value="P:'de novo' cotranslational protein folding"/>
    <property type="evidence" value="ECO:0007669"/>
    <property type="project" value="TreeGrafter"/>
</dbReference>
<dbReference type="GO" id="GO:0051301">
    <property type="term" value="P:cell division"/>
    <property type="evidence" value="ECO:0007669"/>
    <property type="project" value="UniProtKB-KW"/>
</dbReference>
<dbReference type="GO" id="GO:0061077">
    <property type="term" value="P:chaperone-mediated protein folding"/>
    <property type="evidence" value="ECO:0007669"/>
    <property type="project" value="TreeGrafter"/>
</dbReference>
<dbReference type="GO" id="GO:0015031">
    <property type="term" value="P:protein transport"/>
    <property type="evidence" value="ECO:0007669"/>
    <property type="project" value="UniProtKB-UniRule"/>
</dbReference>
<dbReference type="GO" id="GO:0043335">
    <property type="term" value="P:protein unfolding"/>
    <property type="evidence" value="ECO:0007669"/>
    <property type="project" value="TreeGrafter"/>
</dbReference>
<dbReference type="FunFam" id="3.10.50.40:FF:000001">
    <property type="entry name" value="Trigger factor"/>
    <property type="match status" value="1"/>
</dbReference>
<dbReference type="Gene3D" id="3.10.50.40">
    <property type="match status" value="1"/>
</dbReference>
<dbReference type="Gene3D" id="3.30.70.1050">
    <property type="entry name" value="Trigger factor ribosome-binding domain"/>
    <property type="match status" value="1"/>
</dbReference>
<dbReference type="Gene3D" id="1.10.3120.10">
    <property type="entry name" value="Trigger factor, C-terminal domain"/>
    <property type="match status" value="1"/>
</dbReference>
<dbReference type="HAMAP" id="MF_00303">
    <property type="entry name" value="Trigger_factor_Tig"/>
    <property type="match status" value="1"/>
</dbReference>
<dbReference type="InterPro" id="IPR046357">
    <property type="entry name" value="PPIase_dom_sf"/>
</dbReference>
<dbReference type="InterPro" id="IPR001179">
    <property type="entry name" value="PPIase_FKBP_dom"/>
</dbReference>
<dbReference type="InterPro" id="IPR005215">
    <property type="entry name" value="Trig_fac"/>
</dbReference>
<dbReference type="InterPro" id="IPR008880">
    <property type="entry name" value="Trigger_fac_C"/>
</dbReference>
<dbReference type="InterPro" id="IPR037041">
    <property type="entry name" value="Trigger_fac_C_sf"/>
</dbReference>
<dbReference type="InterPro" id="IPR008881">
    <property type="entry name" value="Trigger_fac_ribosome-bd_bac"/>
</dbReference>
<dbReference type="InterPro" id="IPR036611">
    <property type="entry name" value="Trigger_fac_ribosome-bd_sf"/>
</dbReference>
<dbReference type="InterPro" id="IPR027304">
    <property type="entry name" value="Trigger_fact/SurA_dom_sf"/>
</dbReference>
<dbReference type="NCBIfam" id="TIGR00115">
    <property type="entry name" value="tig"/>
    <property type="match status" value="1"/>
</dbReference>
<dbReference type="PANTHER" id="PTHR30560">
    <property type="entry name" value="TRIGGER FACTOR CHAPERONE AND PEPTIDYL-PROLYL CIS/TRANS ISOMERASE"/>
    <property type="match status" value="1"/>
</dbReference>
<dbReference type="PANTHER" id="PTHR30560:SF3">
    <property type="entry name" value="TRIGGER FACTOR-LIKE PROTEIN TIG, CHLOROPLASTIC"/>
    <property type="match status" value="1"/>
</dbReference>
<dbReference type="Pfam" id="PF00254">
    <property type="entry name" value="FKBP_C"/>
    <property type="match status" value="1"/>
</dbReference>
<dbReference type="Pfam" id="PF05698">
    <property type="entry name" value="Trigger_C"/>
    <property type="match status" value="1"/>
</dbReference>
<dbReference type="Pfam" id="PF05697">
    <property type="entry name" value="Trigger_N"/>
    <property type="match status" value="1"/>
</dbReference>
<dbReference type="PIRSF" id="PIRSF003095">
    <property type="entry name" value="Trigger_factor"/>
    <property type="match status" value="1"/>
</dbReference>
<dbReference type="SUPFAM" id="SSF54534">
    <property type="entry name" value="FKBP-like"/>
    <property type="match status" value="1"/>
</dbReference>
<dbReference type="SUPFAM" id="SSF109998">
    <property type="entry name" value="Triger factor/SurA peptide-binding domain-like"/>
    <property type="match status" value="1"/>
</dbReference>
<dbReference type="SUPFAM" id="SSF102735">
    <property type="entry name" value="Trigger factor ribosome-binding domain"/>
    <property type="match status" value="1"/>
</dbReference>
<dbReference type="PROSITE" id="PS50059">
    <property type="entry name" value="FKBP_PPIASE"/>
    <property type="match status" value="1"/>
</dbReference>
<evidence type="ECO:0000255" key="1">
    <source>
        <dbReference type="HAMAP-Rule" id="MF_00303"/>
    </source>
</evidence>
<organism>
    <name type="scientific">Acinetobacter baumannii (strain ATCC 17978 / DSM 105126 / CIP 53.77 / LMG 1025 / NCDC KC755 / 5377)</name>
    <dbReference type="NCBI Taxonomy" id="400667"/>
    <lineage>
        <taxon>Bacteria</taxon>
        <taxon>Pseudomonadati</taxon>
        <taxon>Pseudomonadota</taxon>
        <taxon>Gammaproteobacteria</taxon>
        <taxon>Moraxellales</taxon>
        <taxon>Moraxellaceae</taxon>
        <taxon>Acinetobacter</taxon>
        <taxon>Acinetobacter calcoaceticus/baumannii complex</taxon>
    </lineage>
</organism>
<sequence length="444" mass="49666">MQVTTEAVSGVARRLNVSVPTSRINEQFEARLKRTAKTVKINGFRPGKVPANVVRREYGASIYQEVVNDIIRDSVFEAIQQEKINAVGMPNIEKVEHKEDALVFEATVEVYPEVEVKAFDGLEVERKTAEIKDADVDTMIENLQKQRQTWAVTKGMAKKDMQVTFDFEGSIDGEKFEGGSAEDFKLVLGSGRMIPGFEDGIIGMKAGEEKVIDVTFPEDYQAENLAGKAAQFKITVKQVEKPKLPEIDAEFLKIFGVSEEEGIEKLKADVRKNMEREVRNGLRNQVKQAAFDALVAANEIEVPAAMVAQEIDRQRQQMVQQFTQQFGGAGAQSFDKSMLPDELFKEQAERSVKLGVLVSKVLADAKLEVDQARVDAYIDDMASSYEDPTEVIEYFKNDAQQRAQIEAVVLEDQVVDHILASAKVTDKAVSYEDLLKEQQARRMG</sequence>
<gene>
    <name evidence="1" type="primary">tig</name>
    <name type="ordered locus">A1S_0475</name>
</gene>
<name>TIG_ACIBT</name>
<accession>A3M1Y6</accession>
<proteinExistence type="inferred from homology"/>
<reference key="1">
    <citation type="journal article" date="2007" name="Genes Dev.">
        <title>New insights into Acinetobacter baumannii pathogenesis revealed by high-density pyrosequencing and transposon mutagenesis.</title>
        <authorList>
            <person name="Smith M.G."/>
            <person name="Gianoulis T.A."/>
            <person name="Pukatzki S."/>
            <person name="Mekalanos J.J."/>
            <person name="Ornston L.N."/>
            <person name="Gerstein M."/>
            <person name="Snyder M."/>
        </authorList>
    </citation>
    <scope>NUCLEOTIDE SEQUENCE [LARGE SCALE GENOMIC DNA]</scope>
    <source>
        <strain>ATCC 17978 / DSM 105126 / CIP 53.77 / LMG 1025 / NCDC KC755 / 5377</strain>
    </source>
</reference>
<keyword id="KW-0131">Cell cycle</keyword>
<keyword id="KW-0132">Cell division</keyword>
<keyword id="KW-0143">Chaperone</keyword>
<keyword id="KW-0963">Cytoplasm</keyword>
<keyword id="KW-0413">Isomerase</keyword>
<keyword id="KW-0697">Rotamase</keyword>
<feature type="chain" id="PRO_1000115493" description="Trigger factor">
    <location>
        <begin position="1"/>
        <end position="444"/>
    </location>
</feature>
<feature type="domain" description="PPIase FKBP-type" evidence="1">
    <location>
        <begin position="160"/>
        <end position="245"/>
    </location>
</feature>
<protein>
    <recommendedName>
        <fullName evidence="1">Trigger factor</fullName>
        <shortName evidence="1">TF</shortName>
        <ecNumber evidence="1">5.2.1.8</ecNumber>
    </recommendedName>
    <alternativeName>
        <fullName evidence="1">PPIase</fullName>
    </alternativeName>
</protein>